<gene>
    <name evidence="1" type="primary">rpsZ</name>
    <name evidence="1" type="synonym">rpsN</name>
    <name type="ordered locus">LSEI_2490</name>
</gene>
<organism>
    <name type="scientific">Lacticaseibacillus paracasei (strain ATCC 334 / BCRC 17002 / CCUG 31169 / CIP 107868 / KCTC 3260 / NRRL B-441)</name>
    <name type="common">Lactobacillus paracasei</name>
    <dbReference type="NCBI Taxonomy" id="321967"/>
    <lineage>
        <taxon>Bacteria</taxon>
        <taxon>Bacillati</taxon>
        <taxon>Bacillota</taxon>
        <taxon>Bacilli</taxon>
        <taxon>Lactobacillales</taxon>
        <taxon>Lactobacillaceae</taxon>
        <taxon>Lacticaseibacillus</taxon>
    </lineage>
</organism>
<proteinExistence type="inferred from homology"/>
<feature type="chain" id="PRO_1000067943" description="Small ribosomal subunit protein uS14B">
    <location>
        <begin position="1"/>
        <end position="61"/>
    </location>
</feature>
<feature type="binding site" evidence="1">
    <location>
        <position position="24"/>
    </location>
    <ligand>
        <name>Zn(2+)</name>
        <dbReference type="ChEBI" id="CHEBI:29105"/>
    </ligand>
</feature>
<feature type="binding site" evidence="1">
    <location>
        <position position="27"/>
    </location>
    <ligand>
        <name>Zn(2+)</name>
        <dbReference type="ChEBI" id="CHEBI:29105"/>
    </ligand>
</feature>
<feature type="binding site" evidence="1">
    <location>
        <position position="40"/>
    </location>
    <ligand>
        <name>Zn(2+)</name>
        <dbReference type="ChEBI" id="CHEBI:29105"/>
    </ligand>
</feature>
<feature type="binding site" evidence="1">
    <location>
        <position position="43"/>
    </location>
    <ligand>
        <name>Zn(2+)</name>
        <dbReference type="ChEBI" id="CHEBI:29105"/>
    </ligand>
</feature>
<keyword id="KW-0479">Metal-binding</keyword>
<keyword id="KW-1185">Reference proteome</keyword>
<keyword id="KW-0687">Ribonucleoprotein</keyword>
<keyword id="KW-0689">Ribosomal protein</keyword>
<keyword id="KW-0694">RNA-binding</keyword>
<keyword id="KW-0699">rRNA-binding</keyword>
<keyword id="KW-0862">Zinc</keyword>
<comment type="function">
    <text evidence="1">Binds 16S rRNA, required for the assembly of 30S particles and may also be responsible for determining the conformation of the 16S rRNA at the A site.</text>
</comment>
<comment type="cofactor">
    <cofactor evidence="1">
        <name>Zn(2+)</name>
        <dbReference type="ChEBI" id="CHEBI:29105"/>
    </cofactor>
    <text evidence="1">Binds 1 zinc ion per subunit.</text>
</comment>
<comment type="subunit">
    <text evidence="1">Part of the 30S ribosomal subunit. Contacts proteins S3 and S10.</text>
</comment>
<comment type="similarity">
    <text evidence="1">Belongs to the universal ribosomal protein uS14 family. Zinc-binding uS14 subfamily.</text>
</comment>
<evidence type="ECO:0000255" key="1">
    <source>
        <dbReference type="HAMAP-Rule" id="MF_01364"/>
    </source>
</evidence>
<evidence type="ECO:0000305" key="2"/>
<accession>Q034Z6</accession>
<sequence>MAKKSMIAKNNRPAKFAVQEYTRCQRCGRPHSVYRKFKLCRICLRELAHAGQIPGMRKASW</sequence>
<name>RS14Z_LACP3</name>
<protein>
    <recommendedName>
        <fullName evidence="1">Small ribosomal subunit protein uS14B</fullName>
    </recommendedName>
    <alternativeName>
        <fullName evidence="2">30S ribosomal protein S14 type Z</fullName>
    </alternativeName>
</protein>
<dbReference type="EMBL" id="CP000423">
    <property type="protein sequence ID" value="ABJ71226.1"/>
    <property type="molecule type" value="Genomic_DNA"/>
</dbReference>
<dbReference type="RefSeq" id="WP_003567540.1">
    <property type="nucleotide sequence ID" value="NC_008526.1"/>
</dbReference>
<dbReference type="RefSeq" id="YP_807668.1">
    <property type="nucleotide sequence ID" value="NC_008526.1"/>
</dbReference>
<dbReference type="SMR" id="Q034Z6"/>
<dbReference type="STRING" id="321967.LSEI_2490"/>
<dbReference type="PaxDb" id="321967-LSEI_2490"/>
<dbReference type="KEGG" id="lca:LSEI_2490"/>
<dbReference type="PATRIC" id="fig|321967.11.peg.2444"/>
<dbReference type="HOGENOM" id="CLU_139869_3_0_9"/>
<dbReference type="Proteomes" id="UP000001651">
    <property type="component" value="Chromosome"/>
</dbReference>
<dbReference type="GO" id="GO:0015935">
    <property type="term" value="C:small ribosomal subunit"/>
    <property type="evidence" value="ECO:0007669"/>
    <property type="project" value="TreeGrafter"/>
</dbReference>
<dbReference type="GO" id="GO:0019843">
    <property type="term" value="F:rRNA binding"/>
    <property type="evidence" value="ECO:0007669"/>
    <property type="project" value="UniProtKB-UniRule"/>
</dbReference>
<dbReference type="GO" id="GO:0003735">
    <property type="term" value="F:structural constituent of ribosome"/>
    <property type="evidence" value="ECO:0007669"/>
    <property type="project" value="InterPro"/>
</dbReference>
<dbReference type="GO" id="GO:0008270">
    <property type="term" value="F:zinc ion binding"/>
    <property type="evidence" value="ECO:0007669"/>
    <property type="project" value="UniProtKB-UniRule"/>
</dbReference>
<dbReference type="GO" id="GO:0006412">
    <property type="term" value="P:translation"/>
    <property type="evidence" value="ECO:0007669"/>
    <property type="project" value="UniProtKB-UniRule"/>
</dbReference>
<dbReference type="FunFam" id="4.10.830.10:FF:000001">
    <property type="entry name" value="30S ribosomal protein S14 type Z"/>
    <property type="match status" value="1"/>
</dbReference>
<dbReference type="Gene3D" id="4.10.830.10">
    <property type="entry name" value="30s Ribosomal Protein S14, Chain N"/>
    <property type="match status" value="1"/>
</dbReference>
<dbReference type="HAMAP" id="MF_01364_B">
    <property type="entry name" value="Ribosomal_uS14_2_B"/>
    <property type="match status" value="1"/>
</dbReference>
<dbReference type="InterPro" id="IPR001209">
    <property type="entry name" value="Ribosomal_uS14"/>
</dbReference>
<dbReference type="InterPro" id="IPR023053">
    <property type="entry name" value="Ribosomal_uS14_bact"/>
</dbReference>
<dbReference type="InterPro" id="IPR018271">
    <property type="entry name" value="Ribosomal_uS14_CS"/>
</dbReference>
<dbReference type="InterPro" id="IPR043140">
    <property type="entry name" value="Ribosomal_uS14_sf"/>
</dbReference>
<dbReference type="NCBIfam" id="NF005974">
    <property type="entry name" value="PRK08061.1"/>
    <property type="match status" value="1"/>
</dbReference>
<dbReference type="PANTHER" id="PTHR19836">
    <property type="entry name" value="30S RIBOSOMAL PROTEIN S14"/>
    <property type="match status" value="1"/>
</dbReference>
<dbReference type="PANTHER" id="PTHR19836:SF26">
    <property type="entry name" value="SMALL RIBOSOMAL SUBUNIT PROTEIN US14B"/>
    <property type="match status" value="1"/>
</dbReference>
<dbReference type="Pfam" id="PF00253">
    <property type="entry name" value="Ribosomal_S14"/>
    <property type="match status" value="1"/>
</dbReference>
<dbReference type="SUPFAM" id="SSF57716">
    <property type="entry name" value="Glucocorticoid receptor-like (DNA-binding domain)"/>
    <property type="match status" value="1"/>
</dbReference>
<dbReference type="PROSITE" id="PS00527">
    <property type="entry name" value="RIBOSOMAL_S14"/>
    <property type="match status" value="1"/>
</dbReference>
<reference key="1">
    <citation type="journal article" date="2006" name="Proc. Natl. Acad. Sci. U.S.A.">
        <title>Comparative genomics of the lactic acid bacteria.</title>
        <authorList>
            <person name="Makarova K.S."/>
            <person name="Slesarev A."/>
            <person name="Wolf Y.I."/>
            <person name="Sorokin A."/>
            <person name="Mirkin B."/>
            <person name="Koonin E.V."/>
            <person name="Pavlov A."/>
            <person name="Pavlova N."/>
            <person name="Karamychev V."/>
            <person name="Polouchine N."/>
            <person name="Shakhova V."/>
            <person name="Grigoriev I."/>
            <person name="Lou Y."/>
            <person name="Rohksar D."/>
            <person name="Lucas S."/>
            <person name="Huang K."/>
            <person name="Goodstein D.M."/>
            <person name="Hawkins T."/>
            <person name="Plengvidhya V."/>
            <person name="Welker D."/>
            <person name="Hughes J."/>
            <person name="Goh Y."/>
            <person name="Benson A."/>
            <person name="Baldwin K."/>
            <person name="Lee J.-H."/>
            <person name="Diaz-Muniz I."/>
            <person name="Dosti B."/>
            <person name="Smeianov V."/>
            <person name="Wechter W."/>
            <person name="Barabote R."/>
            <person name="Lorca G."/>
            <person name="Altermann E."/>
            <person name="Barrangou R."/>
            <person name="Ganesan B."/>
            <person name="Xie Y."/>
            <person name="Rawsthorne H."/>
            <person name="Tamir D."/>
            <person name="Parker C."/>
            <person name="Breidt F."/>
            <person name="Broadbent J.R."/>
            <person name="Hutkins R."/>
            <person name="O'Sullivan D."/>
            <person name="Steele J."/>
            <person name="Unlu G."/>
            <person name="Saier M.H. Jr."/>
            <person name="Klaenhammer T."/>
            <person name="Richardson P."/>
            <person name="Kozyavkin S."/>
            <person name="Weimer B.C."/>
            <person name="Mills D.A."/>
        </authorList>
    </citation>
    <scope>NUCLEOTIDE SEQUENCE [LARGE SCALE GENOMIC DNA]</scope>
    <source>
        <strain>ATCC 334 / BCRC 17002 / CCUG 31169 / CIP 107868 / KCTC 3260 / NRRL B-441</strain>
    </source>
</reference>